<proteinExistence type="inferred from homology"/>
<evidence type="ECO:0000255" key="1">
    <source>
        <dbReference type="HAMAP-Rule" id="MF_01714"/>
    </source>
</evidence>
<name>TAUB_CUPPJ</name>
<protein>
    <recommendedName>
        <fullName evidence="1">Taurine import ATP-binding protein TauB</fullName>
        <ecNumber evidence="1">7.6.2.7</ecNumber>
    </recommendedName>
</protein>
<reference key="1">
    <citation type="journal article" date="2010" name="PLoS ONE">
        <title>The complete multipartite genome sequence of Cupriavidus necator JMP134, a versatile pollutant degrader.</title>
        <authorList>
            <person name="Lykidis A."/>
            <person name="Perez-Pantoja D."/>
            <person name="Ledger T."/>
            <person name="Mavromatis K."/>
            <person name="Anderson I.J."/>
            <person name="Ivanova N.N."/>
            <person name="Hooper S.D."/>
            <person name="Lapidus A."/>
            <person name="Lucas S."/>
            <person name="Gonzalez B."/>
            <person name="Kyrpides N.C."/>
        </authorList>
    </citation>
    <scope>NUCLEOTIDE SEQUENCE [LARGE SCALE GENOMIC DNA]</scope>
    <source>
        <strain>JMP134 / LMG 1197</strain>
    </source>
</reference>
<dbReference type="EC" id="7.6.2.7" evidence="1"/>
<dbReference type="EMBL" id="CP000090">
    <property type="protein sequence ID" value="AAZ60841.1"/>
    <property type="molecule type" value="Genomic_DNA"/>
</dbReference>
<dbReference type="SMR" id="Q471U2"/>
<dbReference type="STRING" id="264198.Reut_A1471"/>
<dbReference type="KEGG" id="reu:Reut_A1471"/>
<dbReference type="eggNOG" id="COG4525">
    <property type="taxonomic scope" value="Bacteria"/>
</dbReference>
<dbReference type="HOGENOM" id="CLU_000604_1_22_4"/>
<dbReference type="OrthoDB" id="9783039at2"/>
<dbReference type="GO" id="GO:0005886">
    <property type="term" value="C:plasma membrane"/>
    <property type="evidence" value="ECO:0007669"/>
    <property type="project" value="UniProtKB-SubCell"/>
</dbReference>
<dbReference type="GO" id="GO:0015411">
    <property type="term" value="F:ABC-type taurine transporter transporter activity"/>
    <property type="evidence" value="ECO:0007669"/>
    <property type="project" value="UniProtKB-EC"/>
</dbReference>
<dbReference type="GO" id="GO:0005524">
    <property type="term" value="F:ATP binding"/>
    <property type="evidence" value="ECO:0007669"/>
    <property type="project" value="UniProtKB-KW"/>
</dbReference>
<dbReference type="GO" id="GO:0016887">
    <property type="term" value="F:ATP hydrolysis activity"/>
    <property type="evidence" value="ECO:0007669"/>
    <property type="project" value="InterPro"/>
</dbReference>
<dbReference type="CDD" id="cd03293">
    <property type="entry name" value="ABC_NrtD_SsuB_transporters"/>
    <property type="match status" value="1"/>
</dbReference>
<dbReference type="Gene3D" id="3.40.50.300">
    <property type="entry name" value="P-loop containing nucleotide triphosphate hydrolases"/>
    <property type="match status" value="1"/>
</dbReference>
<dbReference type="InterPro" id="IPR003593">
    <property type="entry name" value="AAA+_ATPase"/>
</dbReference>
<dbReference type="InterPro" id="IPR003439">
    <property type="entry name" value="ABC_transporter-like_ATP-bd"/>
</dbReference>
<dbReference type="InterPro" id="IPR017871">
    <property type="entry name" value="ABC_transporter-like_CS"/>
</dbReference>
<dbReference type="InterPro" id="IPR050166">
    <property type="entry name" value="ABC_transporter_ATP-bind"/>
</dbReference>
<dbReference type="InterPro" id="IPR027417">
    <property type="entry name" value="P-loop_NTPase"/>
</dbReference>
<dbReference type="PANTHER" id="PTHR42788:SF18">
    <property type="entry name" value="TAURINE IMPORT ATP-BINDING PROTEIN TAUB"/>
    <property type="match status" value="1"/>
</dbReference>
<dbReference type="PANTHER" id="PTHR42788">
    <property type="entry name" value="TAURINE IMPORT ATP-BINDING PROTEIN-RELATED"/>
    <property type="match status" value="1"/>
</dbReference>
<dbReference type="Pfam" id="PF00005">
    <property type="entry name" value="ABC_tran"/>
    <property type="match status" value="1"/>
</dbReference>
<dbReference type="SMART" id="SM00382">
    <property type="entry name" value="AAA"/>
    <property type="match status" value="1"/>
</dbReference>
<dbReference type="SUPFAM" id="SSF52540">
    <property type="entry name" value="P-loop containing nucleoside triphosphate hydrolases"/>
    <property type="match status" value="1"/>
</dbReference>
<dbReference type="PROSITE" id="PS00211">
    <property type="entry name" value="ABC_TRANSPORTER_1"/>
    <property type="match status" value="1"/>
</dbReference>
<dbReference type="PROSITE" id="PS50893">
    <property type="entry name" value="ABC_TRANSPORTER_2"/>
    <property type="match status" value="1"/>
</dbReference>
<dbReference type="PROSITE" id="PS51250">
    <property type="entry name" value="TAUB"/>
    <property type="match status" value="1"/>
</dbReference>
<sequence>MSRLEIDKVSVNYGGRGGAQTLALSQVNLTMERGDFVVALGASGCGKTTLLSCIAGFMQPSEGEIRLDGKPVLGPGAERGVVFQKHALMPWLNVADNVALGLRLRGVNRAERLRIAHEKLAQVGLEKVASKPVYQLSGGMQQRVGIARALANDPEVMLMDEPLGALDALTRESIQALILRLWAREQKIVFFITHSVEEALFLATRLIVMTPSPGRIAHSYDLPFARRYIECGDARAVKSDPEFIRYREEIVDLIHATP</sequence>
<feature type="chain" id="PRO_0000275839" description="Taurine import ATP-binding protein TauB">
    <location>
        <begin position="1"/>
        <end position="258"/>
    </location>
</feature>
<feature type="domain" description="ABC transporter" evidence="1">
    <location>
        <begin position="4"/>
        <end position="236"/>
    </location>
</feature>
<feature type="binding site" evidence="1">
    <location>
        <begin position="41"/>
        <end position="48"/>
    </location>
    <ligand>
        <name>ATP</name>
        <dbReference type="ChEBI" id="CHEBI:30616"/>
    </ligand>
</feature>
<keyword id="KW-0067">ATP-binding</keyword>
<keyword id="KW-0997">Cell inner membrane</keyword>
<keyword id="KW-1003">Cell membrane</keyword>
<keyword id="KW-0472">Membrane</keyword>
<keyword id="KW-0547">Nucleotide-binding</keyword>
<keyword id="KW-1278">Translocase</keyword>
<keyword id="KW-0813">Transport</keyword>
<organism>
    <name type="scientific">Cupriavidus pinatubonensis (strain JMP 134 / LMG 1197)</name>
    <name type="common">Cupriavidus necator (strain JMP 134)</name>
    <dbReference type="NCBI Taxonomy" id="264198"/>
    <lineage>
        <taxon>Bacteria</taxon>
        <taxon>Pseudomonadati</taxon>
        <taxon>Pseudomonadota</taxon>
        <taxon>Betaproteobacteria</taxon>
        <taxon>Burkholderiales</taxon>
        <taxon>Burkholderiaceae</taxon>
        <taxon>Cupriavidus</taxon>
    </lineage>
</organism>
<gene>
    <name evidence="1" type="primary">tauB</name>
    <name type="ordered locus">Reut_A1471</name>
</gene>
<accession>Q471U2</accession>
<comment type="function">
    <text evidence="1">Part of the ABC transporter complex TauABC involved in taurine import. Responsible for energy coupling to the transport system.</text>
</comment>
<comment type="catalytic activity">
    <reaction evidence="1">
        <text>taurine(out) + ATP + H2O = taurine(in) + ADP + phosphate + H(+)</text>
        <dbReference type="Rhea" id="RHEA:14613"/>
        <dbReference type="ChEBI" id="CHEBI:15377"/>
        <dbReference type="ChEBI" id="CHEBI:15378"/>
        <dbReference type="ChEBI" id="CHEBI:30616"/>
        <dbReference type="ChEBI" id="CHEBI:43474"/>
        <dbReference type="ChEBI" id="CHEBI:456216"/>
        <dbReference type="ChEBI" id="CHEBI:507393"/>
        <dbReference type="EC" id="7.6.2.7"/>
    </reaction>
</comment>
<comment type="subunit">
    <text evidence="1">The complex is composed of two ATP-binding proteins (TauB), two transmembrane proteins (TauC) and a solute-binding protein (TauA).</text>
</comment>
<comment type="subcellular location">
    <subcellularLocation>
        <location evidence="1">Cell inner membrane</location>
        <topology evidence="1">Peripheral membrane protein</topology>
    </subcellularLocation>
</comment>
<comment type="similarity">
    <text evidence="1">Belongs to the ABC transporter superfamily. Taurine importer (TC 3.A.1.17.1) family.</text>
</comment>